<proteinExistence type="inferred from homology"/>
<keyword id="KW-1003">Cell membrane</keyword>
<keyword id="KW-0472">Membrane</keyword>
<keyword id="KW-0479">Metal-binding</keyword>
<keyword id="KW-1185">Reference proteome</keyword>
<keyword id="KW-0813">Transport</keyword>
<keyword id="KW-0862">Zinc</keyword>
<feature type="chain" id="PRO_0000387319" description="Probable inorganic carbon transporter subunit DabA">
    <location>
        <begin position="1"/>
        <end position="884"/>
    </location>
</feature>
<feature type="binding site" evidence="1">
    <location>
        <position position="390"/>
    </location>
    <ligand>
        <name>Zn(2+)</name>
        <dbReference type="ChEBI" id="CHEBI:29105"/>
    </ligand>
</feature>
<feature type="binding site" evidence="1">
    <location>
        <position position="392"/>
    </location>
    <ligand>
        <name>Zn(2+)</name>
        <dbReference type="ChEBI" id="CHEBI:29105"/>
    </ligand>
</feature>
<feature type="binding site" evidence="1">
    <location>
        <position position="582"/>
    </location>
    <ligand>
        <name>Zn(2+)</name>
        <dbReference type="ChEBI" id="CHEBI:29105"/>
    </ligand>
</feature>
<feature type="binding site" evidence="1">
    <location>
        <position position="597"/>
    </location>
    <ligand>
        <name>Zn(2+)</name>
        <dbReference type="ChEBI" id="CHEBI:29105"/>
    </ligand>
</feature>
<sequence>MGVSKIESTQASTYIDDIHDKVTRASNVIVPLSPISVFAARSPWARLEHKSFDEIAHWLKETRKVDMYPARMTILEANQKGEIDDAYVEQFFQQWLNDTALKIPRENAAQYGRNALKLETLETPTDIKSQLEALVSDLNEQVKFESENTVPLKSTYILDEKNERLIDTVDYHTIKWCKLYIDDAQSGWTMPNRDKGLFYAWRRLVAYDPALTKDQRARLKSLPNEAEDLMQQALSYLNISEADAQTYLENHLLSLPGWAGMMLWQDEHNHKVHDLLFSYLAIRIAMEWAIVEPYLPVSQPEDLNDMNKEELIASWIQWGNFSMQSWKALSIEAQQAHIQFAYRFNEQFCRKLWLDAWEATYNQQLKAMIGPKSSVEAEQQSQTLVQMAFCIDVRSEPFRKHIEANGPFETIGIAGFFGLPIEKAELGKKYSHPSLPVMNQPQHKIKEYTHEHEPNAFQQRKHALESVTYTFKKMKQNVLPSLLLPELSGPWLSLQMFTRSFIPKSVGSVIRKFYTSWLKKPNDTALTLNYEPQHQHNHRHIHLEDDLPVGFTDEEKVNYALQALKLMDLTDDFAPLVVMCGHGSQSANNPYAASLDCGACGGAASGFNAKVLAQLCNLPEVRQGLLQEGVAIPETTIFAAAEHQTSIDTLTWIYVPKLTEAARNAYENIEAAMPKISYQANKKRLSQLPNNNLTNRNPNHEVYRLTNDWSEIRPEWGLAKNAAFIIGQRELTKQSDLAGRAFLHNYNWKNDENGTILENIIAGPALVAQWINLQYYASTVAPHYYGSGSKTTQSVTAGIGVMQGNASDLLTGLPWQSVMSADNKMYHSPIRLVVVIQAPQAFISRLLENDETFKQKVMHGWVRLASVDEDNHWHEWSNEVKKFS</sequence>
<name>DABA_STAS1</name>
<comment type="function">
    <text evidence="1">Part of an energy-coupled inorganic carbon pump.</text>
</comment>
<comment type="cofactor">
    <cofactor evidence="1">
        <name>Zn(2+)</name>
        <dbReference type="ChEBI" id="CHEBI:29105"/>
    </cofactor>
</comment>
<comment type="subunit">
    <text evidence="1">Forms a complex with DabB.</text>
</comment>
<comment type="subcellular location">
    <subcellularLocation>
        <location evidence="1">Cell membrane</location>
        <topology evidence="1">Peripheral membrane protein</topology>
    </subcellularLocation>
</comment>
<comment type="similarity">
    <text evidence="1">Belongs to the inorganic carbon transporter (TC 9.A.2) DabA family.</text>
</comment>
<accession>Q49UP4</accession>
<protein>
    <recommendedName>
        <fullName evidence="1">Probable inorganic carbon transporter subunit DabA</fullName>
    </recommendedName>
</protein>
<gene>
    <name evidence="1" type="primary">dabA</name>
    <name type="ordered locus">SSP2379</name>
</gene>
<organism>
    <name type="scientific">Staphylococcus saprophyticus subsp. saprophyticus (strain ATCC 15305 / DSM 20229 / NCIMB 8711 / NCTC 7292 / S-41)</name>
    <dbReference type="NCBI Taxonomy" id="342451"/>
    <lineage>
        <taxon>Bacteria</taxon>
        <taxon>Bacillati</taxon>
        <taxon>Bacillota</taxon>
        <taxon>Bacilli</taxon>
        <taxon>Bacillales</taxon>
        <taxon>Staphylococcaceae</taxon>
        <taxon>Staphylococcus</taxon>
    </lineage>
</organism>
<dbReference type="EMBL" id="AP008934">
    <property type="protein sequence ID" value="BAE19524.1"/>
    <property type="molecule type" value="Genomic_DNA"/>
</dbReference>
<dbReference type="RefSeq" id="WP_011303970.1">
    <property type="nucleotide sequence ID" value="NC_007350.1"/>
</dbReference>
<dbReference type="SMR" id="Q49UP4"/>
<dbReference type="GeneID" id="3617283"/>
<dbReference type="KEGG" id="ssp:SSP2379"/>
<dbReference type="PATRIC" id="fig|342451.11.peg.2367"/>
<dbReference type="eggNOG" id="COG3002">
    <property type="taxonomic scope" value="Bacteria"/>
</dbReference>
<dbReference type="HOGENOM" id="CLU_009885_0_0_9"/>
<dbReference type="OrthoDB" id="9805101at2"/>
<dbReference type="Proteomes" id="UP000006371">
    <property type="component" value="Chromosome"/>
</dbReference>
<dbReference type="GO" id="GO:0005886">
    <property type="term" value="C:plasma membrane"/>
    <property type="evidence" value="ECO:0007669"/>
    <property type="project" value="UniProtKB-SubCell"/>
</dbReference>
<dbReference type="GO" id="GO:0008270">
    <property type="term" value="F:zinc ion binding"/>
    <property type="evidence" value="ECO:0007669"/>
    <property type="project" value="UniProtKB-UniRule"/>
</dbReference>
<dbReference type="HAMAP" id="MF_01871">
    <property type="entry name" value="DabA"/>
    <property type="match status" value="1"/>
</dbReference>
<dbReference type="InterPro" id="IPR018752">
    <property type="entry name" value="DabA"/>
</dbReference>
<dbReference type="PANTHER" id="PTHR38344:SF1">
    <property type="entry name" value="INORGANIC CARBON TRANSPORTER SUBUNIT DABA-RELATED"/>
    <property type="match status" value="1"/>
</dbReference>
<dbReference type="PANTHER" id="PTHR38344">
    <property type="entry name" value="UPF0753 PROTEIN AQ_863"/>
    <property type="match status" value="1"/>
</dbReference>
<dbReference type="Pfam" id="PF10070">
    <property type="entry name" value="DabA"/>
    <property type="match status" value="1"/>
</dbReference>
<evidence type="ECO:0000255" key="1">
    <source>
        <dbReference type="HAMAP-Rule" id="MF_01871"/>
    </source>
</evidence>
<reference key="1">
    <citation type="journal article" date="2005" name="Proc. Natl. Acad. Sci. U.S.A.">
        <title>Whole genome sequence of Staphylococcus saprophyticus reveals the pathogenesis of uncomplicated urinary tract infection.</title>
        <authorList>
            <person name="Kuroda M."/>
            <person name="Yamashita A."/>
            <person name="Hirakawa H."/>
            <person name="Kumano M."/>
            <person name="Morikawa K."/>
            <person name="Higashide M."/>
            <person name="Maruyama A."/>
            <person name="Inose Y."/>
            <person name="Matoba K."/>
            <person name="Toh H."/>
            <person name="Kuhara S."/>
            <person name="Hattori M."/>
            <person name="Ohta T."/>
        </authorList>
    </citation>
    <scope>NUCLEOTIDE SEQUENCE [LARGE SCALE GENOMIC DNA]</scope>
    <source>
        <strain>ATCC 15305 / DSM 20229 / NCIMB 8711 / NCTC 7292 / S-41</strain>
    </source>
</reference>